<gene>
    <name evidence="1" type="primary">fluC1</name>
    <name type="synonym">crcB1</name>
    <name type="ordered locus">PMM1631</name>
</gene>
<keyword id="KW-0997">Cell inner membrane</keyword>
<keyword id="KW-1003">Cell membrane</keyword>
<keyword id="KW-0407">Ion channel</keyword>
<keyword id="KW-0406">Ion transport</keyword>
<keyword id="KW-0472">Membrane</keyword>
<keyword id="KW-0812">Transmembrane</keyword>
<keyword id="KW-1133">Transmembrane helix</keyword>
<keyword id="KW-0813">Transport</keyword>
<organism>
    <name type="scientific">Prochlorococcus marinus subsp. pastoris (strain CCMP1986 / NIES-2087 / MED4)</name>
    <dbReference type="NCBI Taxonomy" id="59919"/>
    <lineage>
        <taxon>Bacteria</taxon>
        <taxon>Bacillati</taxon>
        <taxon>Cyanobacteriota</taxon>
        <taxon>Cyanophyceae</taxon>
        <taxon>Synechococcales</taxon>
        <taxon>Prochlorococcaceae</taxon>
        <taxon>Prochlorococcus</taxon>
    </lineage>
</organism>
<protein>
    <recommendedName>
        <fullName evidence="1">Fluoride-specific ion channel FluC 1</fullName>
    </recommendedName>
</protein>
<name>FLUC1_PROMP</name>
<sequence>MNKKYLLTFLLTAYCATFLRFYFKNNFVISIIGSFLYGFFISRKISKSKKEILFSGFFACFTSFSGFVHFLYQFIIQGYYLKLFIYLNVIVILNLIIMYIGFQLSRKIT</sequence>
<reference key="1">
    <citation type="journal article" date="2003" name="Nature">
        <title>Genome divergence in two Prochlorococcus ecotypes reflects oceanic niche differentiation.</title>
        <authorList>
            <person name="Rocap G."/>
            <person name="Larimer F.W."/>
            <person name="Lamerdin J.E."/>
            <person name="Malfatti S."/>
            <person name="Chain P."/>
            <person name="Ahlgren N.A."/>
            <person name="Arellano A."/>
            <person name="Coleman M."/>
            <person name="Hauser L."/>
            <person name="Hess W.R."/>
            <person name="Johnson Z.I."/>
            <person name="Land M.L."/>
            <person name="Lindell D."/>
            <person name="Post A.F."/>
            <person name="Regala W."/>
            <person name="Shah M."/>
            <person name="Shaw S.L."/>
            <person name="Steglich C."/>
            <person name="Sullivan M.B."/>
            <person name="Ting C.S."/>
            <person name="Tolonen A."/>
            <person name="Webb E.A."/>
            <person name="Zinser E.R."/>
            <person name="Chisholm S.W."/>
        </authorList>
    </citation>
    <scope>NUCLEOTIDE SEQUENCE [LARGE SCALE GENOMIC DNA]</scope>
    <source>
        <strain>CCMP1986 / NIES-2087 / MED4</strain>
    </source>
</reference>
<proteinExistence type="inferred from homology"/>
<dbReference type="EMBL" id="BX548174">
    <property type="protein sequence ID" value="CAE20090.1"/>
    <property type="molecule type" value="Genomic_DNA"/>
</dbReference>
<dbReference type="RefSeq" id="WP_011133258.1">
    <property type="nucleotide sequence ID" value="NZ_CP138922.1"/>
</dbReference>
<dbReference type="SMR" id="Q7UZM7"/>
<dbReference type="STRING" id="59919.PMM1631"/>
<dbReference type="KEGG" id="pmm:PMM1631"/>
<dbReference type="HOGENOM" id="CLU_2181556_0_0_3"/>
<dbReference type="OrthoDB" id="541524at2"/>
<dbReference type="Proteomes" id="UP000001026">
    <property type="component" value="Chromosome"/>
</dbReference>
<dbReference type="GO" id="GO:0005886">
    <property type="term" value="C:plasma membrane"/>
    <property type="evidence" value="ECO:0007669"/>
    <property type="project" value="UniProtKB-SubCell"/>
</dbReference>
<dbReference type="GO" id="GO:0034220">
    <property type="term" value="P:monoatomic ion transmembrane transport"/>
    <property type="evidence" value="ECO:0007669"/>
    <property type="project" value="UniProtKB-KW"/>
</dbReference>
<dbReference type="InterPro" id="IPR003691">
    <property type="entry name" value="FluC"/>
</dbReference>
<dbReference type="Pfam" id="PF02537">
    <property type="entry name" value="CRCB"/>
    <property type="match status" value="1"/>
</dbReference>
<comment type="function">
    <text evidence="1">Fluoride-specific ion channel. Important for reducing fluoride concentration in the cell, thus reducing its toxicity.</text>
</comment>
<comment type="catalytic activity">
    <reaction evidence="1">
        <text>fluoride(in) = fluoride(out)</text>
        <dbReference type="Rhea" id="RHEA:76159"/>
        <dbReference type="ChEBI" id="CHEBI:17051"/>
    </reaction>
    <physiologicalReaction direction="left-to-right" evidence="1">
        <dbReference type="Rhea" id="RHEA:76160"/>
    </physiologicalReaction>
</comment>
<comment type="subcellular location">
    <subcellularLocation>
        <location evidence="1">Cell inner membrane</location>
        <topology evidence="2">Multi-pass membrane protein</topology>
    </subcellularLocation>
</comment>
<comment type="similarity">
    <text evidence="3">Belongs to the fluoride channel Fluc/FEX (TC 1.A.43) family.</text>
</comment>
<evidence type="ECO:0000250" key="1">
    <source>
        <dbReference type="UniProtKB" id="P37002"/>
    </source>
</evidence>
<evidence type="ECO:0000255" key="2"/>
<evidence type="ECO:0000305" key="3"/>
<accession>Q7UZM7</accession>
<feature type="chain" id="PRO_0000110155" description="Fluoride-specific ion channel FluC 1">
    <location>
        <begin position="1"/>
        <end position="109"/>
    </location>
</feature>
<feature type="transmembrane region" description="Helical" evidence="2">
    <location>
        <begin position="21"/>
        <end position="41"/>
    </location>
</feature>
<feature type="transmembrane region" description="Helical" evidence="2">
    <location>
        <begin position="52"/>
        <end position="72"/>
    </location>
</feature>
<feature type="transmembrane region" description="Helical" evidence="2">
    <location>
        <begin position="83"/>
        <end position="103"/>
    </location>
</feature>